<comment type="subcellular location">
    <subcellularLocation>
        <location evidence="4">Membrane</location>
        <topology evidence="4">Multi-pass membrane protein</topology>
    </subcellularLocation>
</comment>
<keyword id="KW-0472">Membrane</keyword>
<keyword id="KW-0479">Metal-binding</keyword>
<keyword id="KW-1185">Reference proteome</keyword>
<keyword id="KW-0812">Transmembrane</keyword>
<keyword id="KW-1133">Transmembrane helix</keyword>
<keyword id="KW-0862">Zinc</keyword>
<keyword id="KW-0863">Zinc-finger</keyword>
<protein>
    <recommendedName>
        <fullName>RING finger protein 145</fullName>
    </recommendedName>
</protein>
<name>RN145_XENLA</name>
<evidence type="ECO:0000255" key="1"/>
<evidence type="ECO:0000255" key="2">
    <source>
        <dbReference type="PROSITE-ProRule" id="PRU00175"/>
    </source>
</evidence>
<evidence type="ECO:0000256" key="3">
    <source>
        <dbReference type="SAM" id="MobiDB-lite"/>
    </source>
</evidence>
<evidence type="ECO:0000305" key="4"/>
<sequence length="695" mass="78494">MGAKEKLEAMLNVALRVPSIMLLDVLYRWDVSSFFQQIQRSSLNKNPLFQYKYLALNMHYVGYILSVVLLTLPRQHLAKLYLYFVAALLLFAGHQISRDYVRSELESGYEGPMHLEPLSMNRFITALVGQLVVCTLCSCVMKTKQIWLFSAHMLPLLARLCLIPIETIVVINKFAMIFTGLEVLYFLASNLLVPFNLAKSAYRELAQVVEVYGLLALGMSLWNQLVVPVLFMVFWLVLFALQIYTYFSTRDQPTSRERLLFLFLTSIAECCSTPYSLLGLVFTVSFVALGVLTLCKFYLQGYRAFMNDPAMNRGMTEGVTLLILAVQTGLIELQVVHRAFLLSIILFIVVASILQSMLEIADPIVLALGASRDKSLWKHFRAVSLCLFLLVFPSYMAYMICQFFHMDFWLLIIISSSILTSLQVLGTLFVYVLFMIEEFRKEPVENVDDAIYYVNGTYRLLEFLVALCVVAYGVSETVFGEWTVMGSMIIFIHSYYNVWLRAQLGWKSFLLRRDAVNKIKSLPVSTKEQLEQHNDICSICYQDMNSAVITPCSHFFHPGCLKKWLYVQETCPLCHCQLKSLSQQAVAESGSSTNPVVEQSANNPPQEPLSAVAATTETLGTVPTCSALEQEPTMDIEPAESLVERRGELEVHVSQEEANSNSNEVLQRILTTGKVQPEDLNVKALPPESEVCAGI</sequence>
<feature type="chain" id="PRO_0000294027" description="RING finger protein 145">
    <location>
        <begin position="1"/>
        <end position="695"/>
    </location>
</feature>
<feature type="transmembrane region" description="Helical" evidence="1">
    <location>
        <begin position="53"/>
        <end position="73"/>
    </location>
</feature>
<feature type="transmembrane region" description="Helical" evidence="1">
    <location>
        <begin position="77"/>
        <end position="97"/>
    </location>
</feature>
<feature type="transmembrane region" description="Helical" evidence="1">
    <location>
        <begin position="123"/>
        <end position="143"/>
    </location>
</feature>
<feature type="transmembrane region" description="Helical" evidence="1">
    <location>
        <begin position="146"/>
        <end position="166"/>
    </location>
</feature>
<feature type="transmembrane region" description="Helical" evidence="1">
    <location>
        <begin position="168"/>
        <end position="188"/>
    </location>
</feature>
<feature type="transmembrane region" description="Helical" evidence="1">
    <location>
        <begin position="225"/>
        <end position="245"/>
    </location>
</feature>
<feature type="transmembrane region" description="Helical" evidence="1">
    <location>
        <begin position="275"/>
        <end position="295"/>
    </location>
</feature>
<feature type="transmembrane region" description="Helical" evidence="1">
    <location>
        <begin position="316"/>
        <end position="336"/>
    </location>
</feature>
<feature type="transmembrane region" description="Helical" evidence="1">
    <location>
        <begin position="340"/>
        <end position="360"/>
    </location>
</feature>
<feature type="transmembrane region" description="Helical" evidence="1">
    <location>
        <begin position="384"/>
        <end position="404"/>
    </location>
</feature>
<feature type="transmembrane region" description="Helical" evidence="1">
    <location>
        <begin position="410"/>
        <end position="430"/>
    </location>
</feature>
<feature type="transmembrane region" description="Helical" evidence="1">
    <location>
        <begin position="460"/>
        <end position="480"/>
    </location>
</feature>
<feature type="transmembrane region" description="Helical" evidence="1">
    <location>
        <begin position="482"/>
        <end position="502"/>
    </location>
</feature>
<feature type="zinc finger region" description="RING-type; atypical" evidence="2">
    <location>
        <begin position="537"/>
        <end position="575"/>
    </location>
</feature>
<feature type="region of interest" description="Disordered" evidence="3">
    <location>
        <begin position="589"/>
        <end position="608"/>
    </location>
</feature>
<feature type="compositionally biased region" description="Polar residues" evidence="3">
    <location>
        <begin position="589"/>
        <end position="604"/>
    </location>
</feature>
<gene>
    <name type="primary">rnf145</name>
</gene>
<proteinExistence type="evidence at transcript level"/>
<reference key="1">
    <citation type="submission" date="2005-03" db="EMBL/GenBank/DDBJ databases">
        <authorList>
            <consortium name="NIH - Xenopus Gene Collection (XGC) project"/>
        </authorList>
    </citation>
    <scope>NUCLEOTIDE SEQUENCE [LARGE SCALE MRNA]</scope>
    <source>
        <tissue>Egg</tissue>
    </source>
</reference>
<accession>Q5BIY5</accession>
<organism>
    <name type="scientific">Xenopus laevis</name>
    <name type="common">African clawed frog</name>
    <dbReference type="NCBI Taxonomy" id="8355"/>
    <lineage>
        <taxon>Eukaryota</taxon>
        <taxon>Metazoa</taxon>
        <taxon>Chordata</taxon>
        <taxon>Craniata</taxon>
        <taxon>Vertebrata</taxon>
        <taxon>Euteleostomi</taxon>
        <taxon>Amphibia</taxon>
        <taxon>Batrachia</taxon>
        <taxon>Anura</taxon>
        <taxon>Pipoidea</taxon>
        <taxon>Pipidae</taxon>
        <taxon>Xenopodinae</taxon>
        <taxon>Xenopus</taxon>
        <taxon>Xenopus</taxon>
    </lineage>
</organism>
<dbReference type="EMBL" id="BC091708">
    <property type="protein sequence ID" value="AAH91708.1"/>
    <property type="molecule type" value="mRNA"/>
</dbReference>
<dbReference type="RefSeq" id="NP_001089304.1">
    <property type="nucleotide sequence ID" value="NM_001095835.1"/>
</dbReference>
<dbReference type="DNASU" id="734353"/>
<dbReference type="GeneID" id="734353"/>
<dbReference type="KEGG" id="xla:734353"/>
<dbReference type="AGR" id="Xenbase:XB-GENE-17334276"/>
<dbReference type="CTD" id="734353"/>
<dbReference type="Xenbase" id="XB-GENE-17334276">
    <property type="gene designation" value="rnf145.S"/>
</dbReference>
<dbReference type="OrthoDB" id="4752984at2759"/>
<dbReference type="Proteomes" id="UP000186698">
    <property type="component" value="Chromosome 3S"/>
</dbReference>
<dbReference type="Bgee" id="734353">
    <property type="expression patterns" value="Expressed in egg cell and 19 other cell types or tissues"/>
</dbReference>
<dbReference type="GO" id="GO:0012505">
    <property type="term" value="C:endomembrane system"/>
    <property type="evidence" value="ECO:0000318"/>
    <property type="project" value="GO_Central"/>
</dbReference>
<dbReference type="GO" id="GO:0016020">
    <property type="term" value="C:membrane"/>
    <property type="evidence" value="ECO:0007669"/>
    <property type="project" value="UniProtKB-SubCell"/>
</dbReference>
<dbReference type="GO" id="GO:0061630">
    <property type="term" value="F:ubiquitin protein ligase activity"/>
    <property type="evidence" value="ECO:0000318"/>
    <property type="project" value="GO_Central"/>
</dbReference>
<dbReference type="GO" id="GO:0008270">
    <property type="term" value="F:zinc ion binding"/>
    <property type="evidence" value="ECO:0007669"/>
    <property type="project" value="UniProtKB-KW"/>
</dbReference>
<dbReference type="GO" id="GO:0036503">
    <property type="term" value="P:ERAD pathway"/>
    <property type="evidence" value="ECO:0000318"/>
    <property type="project" value="GO_Central"/>
</dbReference>
<dbReference type="GO" id="GO:0043161">
    <property type="term" value="P:proteasome-mediated ubiquitin-dependent protein catabolic process"/>
    <property type="evidence" value="ECO:0000318"/>
    <property type="project" value="GO_Central"/>
</dbReference>
<dbReference type="CDD" id="cd16684">
    <property type="entry name" value="RING-H2_RNF145"/>
    <property type="match status" value="1"/>
</dbReference>
<dbReference type="FunFam" id="3.30.40.10:FF:000145">
    <property type="entry name" value="RING finger protein 145"/>
    <property type="match status" value="1"/>
</dbReference>
<dbReference type="Gene3D" id="3.30.40.10">
    <property type="entry name" value="Zinc/RING finger domain, C3HC4 (zinc finger)"/>
    <property type="match status" value="1"/>
</dbReference>
<dbReference type="InterPro" id="IPR050731">
    <property type="entry name" value="HRD1_E3_ubiq-ligases"/>
</dbReference>
<dbReference type="InterPro" id="IPR047823">
    <property type="entry name" value="RNF145_RING-H2"/>
</dbReference>
<dbReference type="InterPro" id="IPR025754">
    <property type="entry name" value="TRC8_N_dom"/>
</dbReference>
<dbReference type="InterPro" id="IPR001841">
    <property type="entry name" value="Znf_RING"/>
</dbReference>
<dbReference type="InterPro" id="IPR011016">
    <property type="entry name" value="Znf_RING-CH"/>
</dbReference>
<dbReference type="InterPro" id="IPR013083">
    <property type="entry name" value="Znf_RING/FYVE/PHD"/>
</dbReference>
<dbReference type="PANTHER" id="PTHR22763:SF167">
    <property type="entry name" value="RING FINGER PROTEIN 145"/>
    <property type="match status" value="1"/>
</dbReference>
<dbReference type="PANTHER" id="PTHR22763">
    <property type="entry name" value="RING ZINC FINGER PROTEIN"/>
    <property type="match status" value="1"/>
</dbReference>
<dbReference type="Pfam" id="PF13705">
    <property type="entry name" value="TRC8_N"/>
    <property type="match status" value="1"/>
</dbReference>
<dbReference type="Pfam" id="PF13639">
    <property type="entry name" value="zf-RING_2"/>
    <property type="match status" value="1"/>
</dbReference>
<dbReference type="SMART" id="SM00184">
    <property type="entry name" value="RING"/>
    <property type="match status" value="1"/>
</dbReference>
<dbReference type="SMART" id="SM00744">
    <property type="entry name" value="RINGv"/>
    <property type="match status" value="1"/>
</dbReference>
<dbReference type="SUPFAM" id="SSF57850">
    <property type="entry name" value="RING/U-box"/>
    <property type="match status" value="1"/>
</dbReference>
<dbReference type="PROSITE" id="PS50089">
    <property type="entry name" value="ZF_RING_2"/>
    <property type="match status" value="1"/>
</dbReference>